<reference key="1">
    <citation type="journal article" date="2006" name="Nat. Biotechnol.">
        <title>Genome sequence of the bioplastic-producing 'Knallgas' bacterium Ralstonia eutropha H16.</title>
        <authorList>
            <person name="Pohlmann A."/>
            <person name="Fricke W.F."/>
            <person name="Reinecke F."/>
            <person name="Kusian B."/>
            <person name="Liesegang H."/>
            <person name="Cramm R."/>
            <person name="Eitinger T."/>
            <person name="Ewering C."/>
            <person name="Poetter M."/>
            <person name="Schwartz E."/>
            <person name="Strittmatter A."/>
            <person name="Voss I."/>
            <person name="Gottschalk G."/>
            <person name="Steinbuechel A."/>
            <person name="Friedrich B."/>
            <person name="Bowien B."/>
        </authorList>
    </citation>
    <scope>NUCLEOTIDE SEQUENCE [LARGE SCALE GENOMIC DNA]</scope>
    <source>
        <strain>ATCC 17699 / DSM 428 / KCTC 22496 / NCIMB 10442 / H16 / Stanier 337</strain>
    </source>
</reference>
<accession>Q0K5C1</accession>
<protein>
    <recommendedName>
        <fullName evidence="1">Membrane protein insertase YidC</fullName>
    </recommendedName>
    <alternativeName>
        <fullName evidence="1">Foldase YidC</fullName>
    </alternativeName>
    <alternativeName>
        <fullName evidence="1">Membrane integrase YidC</fullName>
    </alternativeName>
    <alternativeName>
        <fullName evidence="1">Membrane protein YidC</fullName>
    </alternativeName>
</protein>
<feature type="chain" id="PRO_1000070148" description="Membrane protein insertase YidC">
    <location>
        <begin position="1"/>
        <end position="555"/>
    </location>
</feature>
<feature type="transmembrane region" description="Helical" evidence="1">
    <location>
        <begin position="7"/>
        <end position="24"/>
    </location>
</feature>
<feature type="transmembrane region" description="Helical" evidence="1">
    <location>
        <begin position="334"/>
        <end position="354"/>
    </location>
</feature>
<feature type="transmembrane region" description="Helical" evidence="1">
    <location>
        <begin position="360"/>
        <end position="380"/>
    </location>
</feature>
<feature type="transmembrane region" description="Helical" evidence="1">
    <location>
        <begin position="430"/>
        <end position="450"/>
    </location>
</feature>
<feature type="transmembrane region" description="Helical" evidence="1">
    <location>
        <begin position="468"/>
        <end position="488"/>
    </location>
</feature>
<feature type="transmembrane region" description="Helical" evidence="1">
    <location>
        <begin position="503"/>
        <end position="523"/>
    </location>
</feature>
<feature type="region of interest" description="Disordered" evidence="2">
    <location>
        <begin position="62"/>
        <end position="81"/>
    </location>
</feature>
<keyword id="KW-0997">Cell inner membrane</keyword>
<keyword id="KW-1003">Cell membrane</keyword>
<keyword id="KW-0143">Chaperone</keyword>
<keyword id="KW-0472">Membrane</keyword>
<keyword id="KW-0653">Protein transport</keyword>
<keyword id="KW-1185">Reference proteome</keyword>
<keyword id="KW-0812">Transmembrane</keyword>
<keyword id="KW-1133">Transmembrane helix</keyword>
<keyword id="KW-0813">Transport</keyword>
<organism>
    <name type="scientific">Cupriavidus necator (strain ATCC 17699 / DSM 428 / KCTC 22496 / NCIMB 10442 / H16 / Stanier 337)</name>
    <name type="common">Ralstonia eutropha</name>
    <dbReference type="NCBI Taxonomy" id="381666"/>
    <lineage>
        <taxon>Bacteria</taxon>
        <taxon>Pseudomonadati</taxon>
        <taxon>Pseudomonadota</taxon>
        <taxon>Betaproteobacteria</taxon>
        <taxon>Burkholderiales</taxon>
        <taxon>Burkholderiaceae</taxon>
        <taxon>Cupriavidus</taxon>
    </lineage>
</organism>
<name>YIDC_CUPNH</name>
<dbReference type="EMBL" id="AM260479">
    <property type="protein sequence ID" value="CAJ94800.1"/>
    <property type="molecule type" value="Genomic_DNA"/>
</dbReference>
<dbReference type="RefSeq" id="WP_011616294.1">
    <property type="nucleotide sequence ID" value="NC_008313.1"/>
</dbReference>
<dbReference type="SMR" id="Q0K5C1"/>
<dbReference type="STRING" id="381666.H16_A3744"/>
<dbReference type="KEGG" id="reh:H16_A3744"/>
<dbReference type="PATRIC" id="fig|381666.6.peg.4139"/>
<dbReference type="eggNOG" id="COG0706">
    <property type="taxonomic scope" value="Bacteria"/>
</dbReference>
<dbReference type="HOGENOM" id="CLU_016535_3_0_4"/>
<dbReference type="OrthoDB" id="9780552at2"/>
<dbReference type="Proteomes" id="UP000008210">
    <property type="component" value="Chromosome 1"/>
</dbReference>
<dbReference type="GO" id="GO:0005886">
    <property type="term" value="C:plasma membrane"/>
    <property type="evidence" value="ECO:0007669"/>
    <property type="project" value="UniProtKB-SubCell"/>
</dbReference>
<dbReference type="GO" id="GO:0032977">
    <property type="term" value="F:membrane insertase activity"/>
    <property type="evidence" value="ECO:0007669"/>
    <property type="project" value="InterPro"/>
</dbReference>
<dbReference type="GO" id="GO:0051205">
    <property type="term" value="P:protein insertion into membrane"/>
    <property type="evidence" value="ECO:0007669"/>
    <property type="project" value="TreeGrafter"/>
</dbReference>
<dbReference type="GO" id="GO:0015031">
    <property type="term" value="P:protein transport"/>
    <property type="evidence" value="ECO:0007669"/>
    <property type="project" value="UniProtKB-KW"/>
</dbReference>
<dbReference type="CDD" id="cd20070">
    <property type="entry name" value="5TM_YidC_Alb3"/>
    <property type="match status" value="1"/>
</dbReference>
<dbReference type="CDD" id="cd19961">
    <property type="entry name" value="EcYidC-like_peri"/>
    <property type="match status" value="1"/>
</dbReference>
<dbReference type="Gene3D" id="2.70.98.90">
    <property type="match status" value="1"/>
</dbReference>
<dbReference type="HAMAP" id="MF_01810">
    <property type="entry name" value="YidC_type1"/>
    <property type="match status" value="1"/>
</dbReference>
<dbReference type="InterPro" id="IPR019998">
    <property type="entry name" value="Membr_insert_YidC"/>
</dbReference>
<dbReference type="InterPro" id="IPR028053">
    <property type="entry name" value="Membr_insert_YidC_N"/>
</dbReference>
<dbReference type="InterPro" id="IPR001708">
    <property type="entry name" value="YidC/ALB3/OXA1/COX18"/>
</dbReference>
<dbReference type="InterPro" id="IPR028055">
    <property type="entry name" value="YidC/Oxa/ALB_C"/>
</dbReference>
<dbReference type="InterPro" id="IPR047196">
    <property type="entry name" value="YidC_ALB_C"/>
</dbReference>
<dbReference type="InterPro" id="IPR038221">
    <property type="entry name" value="YidC_periplasmic_sf"/>
</dbReference>
<dbReference type="NCBIfam" id="NF002352">
    <property type="entry name" value="PRK01318.1-3"/>
    <property type="match status" value="1"/>
</dbReference>
<dbReference type="NCBIfam" id="TIGR03593">
    <property type="entry name" value="yidC_nterm"/>
    <property type="match status" value="1"/>
</dbReference>
<dbReference type="NCBIfam" id="TIGR03592">
    <property type="entry name" value="yidC_oxa1_cterm"/>
    <property type="match status" value="1"/>
</dbReference>
<dbReference type="PANTHER" id="PTHR12428:SF65">
    <property type="entry name" value="CYTOCHROME C OXIDASE ASSEMBLY PROTEIN COX18, MITOCHONDRIAL"/>
    <property type="match status" value="1"/>
</dbReference>
<dbReference type="PANTHER" id="PTHR12428">
    <property type="entry name" value="OXA1"/>
    <property type="match status" value="1"/>
</dbReference>
<dbReference type="Pfam" id="PF02096">
    <property type="entry name" value="60KD_IMP"/>
    <property type="match status" value="1"/>
</dbReference>
<dbReference type="Pfam" id="PF14849">
    <property type="entry name" value="YidC_periplas"/>
    <property type="match status" value="1"/>
</dbReference>
<dbReference type="PRINTS" id="PR00701">
    <property type="entry name" value="60KDINNERMP"/>
</dbReference>
<dbReference type="PRINTS" id="PR01900">
    <property type="entry name" value="YIDCPROTEIN"/>
</dbReference>
<comment type="function">
    <text evidence="1">Required for the insertion and/or proper folding and/or complex formation of integral membrane proteins into the membrane. Involved in integration of membrane proteins that insert both dependently and independently of the Sec translocase complex, as well as at least some lipoproteins. Aids folding of multispanning membrane proteins.</text>
</comment>
<comment type="subunit">
    <text evidence="1">Interacts with the Sec translocase complex via SecD. Specifically interacts with transmembrane segments of nascent integral membrane proteins during membrane integration.</text>
</comment>
<comment type="subcellular location">
    <subcellularLocation>
        <location evidence="1">Cell inner membrane</location>
        <topology evidence="1">Multi-pass membrane protein</topology>
    </subcellularLocation>
</comment>
<comment type="similarity">
    <text evidence="1">Belongs to the OXA1/ALB3/YidC family. Type 1 subfamily.</text>
</comment>
<proteinExistence type="inferred from homology"/>
<evidence type="ECO:0000255" key="1">
    <source>
        <dbReference type="HAMAP-Rule" id="MF_01810"/>
    </source>
</evidence>
<evidence type="ECO:0000256" key="2">
    <source>
        <dbReference type="SAM" id="MobiDB-lite"/>
    </source>
</evidence>
<gene>
    <name evidence="1" type="primary">yidC</name>
    <name type="ordered locus">H16_A3744</name>
</gene>
<sequence>MDIKRTILWVIFSMSLVLLYDNWQRSQGHASMFFPSTTQQAASAPAASGAAAQGDVPKANVAPGAAGTAAPAAPQAAAQPTGEKVVVTTDTVRAEIDTAGGIVSRLELLKEHEKDGKPVVLFERDNVRTYMARSGLIGGDLPNHTTVFTAAPGPRTLDGAEQLEVALTAEKNGVKLVKTYVFRKGSYVVDTKFAVTNAGAAPVSPTLYLELARDGSKVEQSQFYSTFTGPAVYTDADKYHKIDFEDIAKGKATVPAAANNGWVAMVQHYFASAWIPQTGKEHSFYVQQIDPHLYRVGVQQPLGELAPGATVTTDARLFAGPQEEHMLEKIAPGLELVKDYGWLTILAKPLFWLLEKLHGFLGNWGWSIIALTVLIKLVFFPLSAASYKSMGKMKDLQPRMTSIRERYKNDPQKMNQEMMGLYKTEKVNPLGGCLPIVIQIPVFIALYWVLLSSVEMRGAPWLGWIHDLSVPDPFYILPIVMAVSMFVQTKLNPTPPDPVQAKVMMIMPLVFSVMFFFFPAGLVLYWVVNNILSIAQQWQINRMLGKGKAAVVAKS</sequence>